<gene>
    <name evidence="1" type="primary">queA</name>
    <name type="ordered locus">SAOUHSC_01749</name>
</gene>
<evidence type="ECO:0000255" key="1">
    <source>
        <dbReference type="HAMAP-Rule" id="MF_00113"/>
    </source>
</evidence>
<sequence>MNIEEFDYDLPESLIAQTPLKDRDHSRLLVMDRETGEMKHLHFKDIIEYFRPGDTLVLNDTRVMPARLFGLKEETGAKVEMLMLTQIEGNDWEVLLKPAKRIKVGNKLNFGNGKIIAECIKEMDQGGRIMRLHYEGILQERLDELGEMPLPPYIKERLDDPDRYQTVYAKESGSAAAPTAGLHFTDELLIEIKNKGVNIAFVTLHVGLGTFRPVSVDDVNDHEMHSEYYQMTQETADLLNDTKSKGHRIISVGTTSTRTLETIRRDHDKFVETSGWTNIFIYPGFDFKAIDGQITNFHLPKSTLVMLVSAFSSRENVLNAYKTAVNLEYRFFSFGDAMLII</sequence>
<keyword id="KW-0963">Cytoplasm</keyword>
<keyword id="KW-0671">Queuosine biosynthesis</keyword>
<keyword id="KW-1185">Reference proteome</keyword>
<keyword id="KW-0949">S-adenosyl-L-methionine</keyword>
<keyword id="KW-0808">Transferase</keyword>
<dbReference type="EC" id="2.4.99.17" evidence="1"/>
<dbReference type="EMBL" id="CP000253">
    <property type="protein sequence ID" value="ABD30819.1"/>
    <property type="molecule type" value="Genomic_DNA"/>
</dbReference>
<dbReference type="RefSeq" id="WP_001019172.1">
    <property type="nucleotide sequence ID" value="NZ_LS483365.1"/>
</dbReference>
<dbReference type="RefSeq" id="YP_500255.1">
    <property type="nucleotide sequence ID" value="NC_007795.1"/>
</dbReference>
<dbReference type="SMR" id="Q2FXT5"/>
<dbReference type="STRING" id="93061.SAOUHSC_01749"/>
<dbReference type="PaxDb" id="1280-SAXN108_1667"/>
<dbReference type="GeneID" id="3920548"/>
<dbReference type="KEGG" id="sao:SAOUHSC_01749"/>
<dbReference type="PATRIC" id="fig|93061.5.peg.1593"/>
<dbReference type="eggNOG" id="COG0809">
    <property type="taxonomic scope" value="Bacteria"/>
</dbReference>
<dbReference type="HOGENOM" id="CLU_039110_1_0_9"/>
<dbReference type="OrthoDB" id="9805933at2"/>
<dbReference type="UniPathway" id="UPA00392"/>
<dbReference type="PRO" id="PR:Q2FXT5"/>
<dbReference type="Proteomes" id="UP000008816">
    <property type="component" value="Chromosome"/>
</dbReference>
<dbReference type="GO" id="GO:0005737">
    <property type="term" value="C:cytoplasm"/>
    <property type="evidence" value="ECO:0007669"/>
    <property type="project" value="UniProtKB-SubCell"/>
</dbReference>
<dbReference type="GO" id="GO:0051075">
    <property type="term" value="F:S-adenosylmethionine:tRNA ribosyltransferase-isomerase activity"/>
    <property type="evidence" value="ECO:0000318"/>
    <property type="project" value="GO_Central"/>
</dbReference>
<dbReference type="GO" id="GO:0008616">
    <property type="term" value="P:queuosine biosynthetic process"/>
    <property type="evidence" value="ECO:0000318"/>
    <property type="project" value="GO_Central"/>
</dbReference>
<dbReference type="GO" id="GO:0002099">
    <property type="term" value="P:tRNA wobble guanine modification"/>
    <property type="evidence" value="ECO:0000318"/>
    <property type="project" value="GO_Central"/>
</dbReference>
<dbReference type="FunFam" id="2.40.10.240:FF:000002">
    <property type="entry name" value="S-adenosylmethionine:tRNA ribosyltransferase-isomerase"/>
    <property type="match status" value="1"/>
</dbReference>
<dbReference type="FunFam" id="3.40.1780.10:FF:000001">
    <property type="entry name" value="S-adenosylmethionine:tRNA ribosyltransferase-isomerase"/>
    <property type="match status" value="1"/>
</dbReference>
<dbReference type="Gene3D" id="2.40.10.240">
    <property type="entry name" value="QueA-like"/>
    <property type="match status" value="1"/>
</dbReference>
<dbReference type="Gene3D" id="3.40.1780.10">
    <property type="entry name" value="QueA-like"/>
    <property type="match status" value="1"/>
</dbReference>
<dbReference type="HAMAP" id="MF_00113">
    <property type="entry name" value="QueA"/>
    <property type="match status" value="1"/>
</dbReference>
<dbReference type="InterPro" id="IPR003699">
    <property type="entry name" value="QueA"/>
</dbReference>
<dbReference type="InterPro" id="IPR042118">
    <property type="entry name" value="QueA_dom1"/>
</dbReference>
<dbReference type="InterPro" id="IPR042119">
    <property type="entry name" value="QueA_dom2"/>
</dbReference>
<dbReference type="InterPro" id="IPR036100">
    <property type="entry name" value="QueA_sf"/>
</dbReference>
<dbReference type="NCBIfam" id="NF001140">
    <property type="entry name" value="PRK00147.1"/>
    <property type="match status" value="1"/>
</dbReference>
<dbReference type="NCBIfam" id="TIGR00113">
    <property type="entry name" value="queA"/>
    <property type="match status" value="1"/>
</dbReference>
<dbReference type="PANTHER" id="PTHR30307">
    <property type="entry name" value="S-ADENOSYLMETHIONINE:TRNA RIBOSYLTRANSFERASE-ISOMERASE"/>
    <property type="match status" value="1"/>
</dbReference>
<dbReference type="PANTHER" id="PTHR30307:SF0">
    <property type="entry name" value="S-ADENOSYLMETHIONINE:TRNA RIBOSYLTRANSFERASE-ISOMERASE"/>
    <property type="match status" value="1"/>
</dbReference>
<dbReference type="Pfam" id="PF02547">
    <property type="entry name" value="Queuosine_synth"/>
    <property type="match status" value="1"/>
</dbReference>
<dbReference type="SUPFAM" id="SSF111337">
    <property type="entry name" value="QueA-like"/>
    <property type="match status" value="1"/>
</dbReference>
<protein>
    <recommendedName>
        <fullName evidence="1">S-adenosylmethionine:tRNA ribosyltransferase-isomerase</fullName>
        <ecNumber evidence="1">2.4.99.17</ecNumber>
    </recommendedName>
    <alternativeName>
        <fullName evidence="1">Queuosine biosynthesis protein QueA</fullName>
    </alternativeName>
</protein>
<organism>
    <name type="scientific">Staphylococcus aureus (strain NCTC 8325 / PS 47)</name>
    <dbReference type="NCBI Taxonomy" id="93061"/>
    <lineage>
        <taxon>Bacteria</taxon>
        <taxon>Bacillati</taxon>
        <taxon>Bacillota</taxon>
        <taxon>Bacilli</taxon>
        <taxon>Bacillales</taxon>
        <taxon>Staphylococcaceae</taxon>
        <taxon>Staphylococcus</taxon>
    </lineage>
</organism>
<accession>Q2FXT5</accession>
<proteinExistence type="inferred from homology"/>
<name>QUEA_STAA8</name>
<feature type="chain" id="PRO_1000015287" description="S-adenosylmethionine:tRNA ribosyltransferase-isomerase">
    <location>
        <begin position="1"/>
        <end position="341"/>
    </location>
</feature>
<comment type="function">
    <text evidence="1">Transfers and isomerizes the ribose moiety from AdoMet to the 7-aminomethyl group of 7-deazaguanine (preQ1-tRNA) to give epoxyqueuosine (oQ-tRNA).</text>
</comment>
<comment type="catalytic activity">
    <reaction evidence="1">
        <text>7-aminomethyl-7-carbaguanosine(34) in tRNA + S-adenosyl-L-methionine = epoxyqueuosine(34) in tRNA + adenine + L-methionine + 2 H(+)</text>
        <dbReference type="Rhea" id="RHEA:32155"/>
        <dbReference type="Rhea" id="RHEA-COMP:10342"/>
        <dbReference type="Rhea" id="RHEA-COMP:18582"/>
        <dbReference type="ChEBI" id="CHEBI:15378"/>
        <dbReference type="ChEBI" id="CHEBI:16708"/>
        <dbReference type="ChEBI" id="CHEBI:57844"/>
        <dbReference type="ChEBI" id="CHEBI:59789"/>
        <dbReference type="ChEBI" id="CHEBI:82833"/>
        <dbReference type="ChEBI" id="CHEBI:194443"/>
        <dbReference type="EC" id="2.4.99.17"/>
    </reaction>
</comment>
<comment type="pathway">
    <text evidence="1">tRNA modification; tRNA-queuosine biosynthesis.</text>
</comment>
<comment type="subunit">
    <text evidence="1">Monomer.</text>
</comment>
<comment type="subcellular location">
    <subcellularLocation>
        <location evidence="1">Cytoplasm</location>
    </subcellularLocation>
</comment>
<comment type="similarity">
    <text evidence="1">Belongs to the QueA family.</text>
</comment>
<reference key="1">
    <citation type="book" date="2006" name="Gram positive pathogens, 2nd edition">
        <title>The Staphylococcus aureus NCTC 8325 genome.</title>
        <editorList>
            <person name="Fischetti V."/>
            <person name="Novick R."/>
            <person name="Ferretti J."/>
            <person name="Portnoy D."/>
            <person name="Rood J."/>
        </editorList>
        <authorList>
            <person name="Gillaspy A.F."/>
            <person name="Worrell V."/>
            <person name="Orvis J."/>
            <person name="Roe B.A."/>
            <person name="Dyer D.W."/>
            <person name="Iandolo J.J."/>
        </authorList>
    </citation>
    <scope>NUCLEOTIDE SEQUENCE [LARGE SCALE GENOMIC DNA]</scope>
    <source>
        <strain>NCTC 8325 / PS 47</strain>
    </source>
</reference>